<accession>B2K4I2</accession>
<gene>
    <name evidence="1" type="primary">speE</name>
    <name type="ordered locus">YPTS_0751</name>
</gene>
<sequence>MSQKELWYETLHANFGQYFSVENVLYREKTEHQDLVIFENPELGRVMALDGVVQTTERDEFIYHEMMTHVPLLAHGQAKKVLIIGGGDGAMLREVSRHKNIEQITMVEIDAGVVEFCRQYLPNHSAGAYDDPRFKLVIDDGVNFVNQTTEKFDVIISDCTDPIGPGESLFTSVFYEGCARSLNEGGIFVAQNGVCFLQQDEAVNSHNKLSHYFSDVSFYQAAIPTYYGGIMTFAWATQNPALRQLDLATLQNRFAQAGLACRYYNPAIHVGSFALPQYLLDALTTIPKVIGVDSSE</sequence>
<comment type="function">
    <text evidence="1">Catalyzes the irreversible transfer of a propylamine group from the amino donor S-adenosylmethioninamine (decarboxy-AdoMet) to putrescine (1,4-diaminobutane) to yield spermidine.</text>
</comment>
<comment type="catalytic activity">
    <reaction evidence="1">
        <text>S-adenosyl 3-(methylsulfanyl)propylamine + putrescine = S-methyl-5'-thioadenosine + spermidine + H(+)</text>
        <dbReference type="Rhea" id="RHEA:12721"/>
        <dbReference type="ChEBI" id="CHEBI:15378"/>
        <dbReference type="ChEBI" id="CHEBI:17509"/>
        <dbReference type="ChEBI" id="CHEBI:57443"/>
        <dbReference type="ChEBI" id="CHEBI:57834"/>
        <dbReference type="ChEBI" id="CHEBI:326268"/>
        <dbReference type="EC" id="2.5.1.16"/>
    </reaction>
</comment>
<comment type="pathway">
    <text evidence="1">Amine and polyamine biosynthesis; spermidine biosynthesis; spermidine from putrescine: step 1/1.</text>
</comment>
<comment type="subunit">
    <text evidence="1">Homodimer or homotetramer.</text>
</comment>
<comment type="subcellular location">
    <subcellularLocation>
        <location evidence="1">Cytoplasm</location>
    </subcellularLocation>
</comment>
<comment type="similarity">
    <text evidence="1">Belongs to the spermidine/spermine synthase family.</text>
</comment>
<dbReference type="EC" id="2.5.1.16" evidence="1"/>
<dbReference type="EMBL" id="CP001048">
    <property type="protein sequence ID" value="ACC87735.1"/>
    <property type="molecule type" value="Genomic_DNA"/>
</dbReference>
<dbReference type="RefSeq" id="WP_011191746.1">
    <property type="nucleotide sequence ID" value="NZ_CP009780.1"/>
</dbReference>
<dbReference type="SMR" id="B2K4I2"/>
<dbReference type="GeneID" id="49787275"/>
<dbReference type="KEGG" id="ypb:YPTS_0751"/>
<dbReference type="PATRIC" id="fig|502801.10.peg.81"/>
<dbReference type="UniPathway" id="UPA00248">
    <property type="reaction ID" value="UER00314"/>
</dbReference>
<dbReference type="GO" id="GO:0005829">
    <property type="term" value="C:cytosol"/>
    <property type="evidence" value="ECO:0007669"/>
    <property type="project" value="TreeGrafter"/>
</dbReference>
<dbReference type="GO" id="GO:0004766">
    <property type="term" value="F:spermidine synthase activity"/>
    <property type="evidence" value="ECO:0007669"/>
    <property type="project" value="UniProtKB-UniRule"/>
</dbReference>
<dbReference type="GO" id="GO:0008295">
    <property type="term" value="P:spermidine biosynthetic process"/>
    <property type="evidence" value="ECO:0007669"/>
    <property type="project" value="UniProtKB-UniRule"/>
</dbReference>
<dbReference type="CDD" id="cd02440">
    <property type="entry name" value="AdoMet_MTases"/>
    <property type="match status" value="1"/>
</dbReference>
<dbReference type="FunFam" id="2.30.140.10:FF:000002">
    <property type="entry name" value="Polyamine aminopropyltransferase"/>
    <property type="match status" value="1"/>
</dbReference>
<dbReference type="FunFam" id="3.40.50.150:FF:000026">
    <property type="entry name" value="Polyamine aminopropyltransferase"/>
    <property type="match status" value="1"/>
</dbReference>
<dbReference type="Gene3D" id="2.30.140.10">
    <property type="entry name" value="Spermidine synthase, tetramerisation domain"/>
    <property type="match status" value="1"/>
</dbReference>
<dbReference type="Gene3D" id="3.40.50.150">
    <property type="entry name" value="Vaccinia Virus protein VP39"/>
    <property type="match status" value="1"/>
</dbReference>
<dbReference type="HAMAP" id="MF_00198">
    <property type="entry name" value="Spermidine_synth"/>
    <property type="match status" value="1"/>
</dbReference>
<dbReference type="InterPro" id="IPR030374">
    <property type="entry name" value="PABS"/>
</dbReference>
<dbReference type="InterPro" id="IPR030373">
    <property type="entry name" value="PABS_CS"/>
</dbReference>
<dbReference type="InterPro" id="IPR029063">
    <property type="entry name" value="SAM-dependent_MTases_sf"/>
</dbReference>
<dbReference type="InterPro" id="IPR001045">
    <property type="entry name" value="Spermi_synthase"/>
</dbReference>
<dbReference type="InterPro" id="IPR035246">
    <property type="entry name" value="Spermidine_synt_N"/>
</dbReference>
<dbReference type="InterPro" id="IPR037163">
    <property type="entry name" value="Spermidine_synt_N_sf"/>
</dbReference>
<dbReference type="NCBIfam" id="NF037959">
    <property type="entry name" value="MFS_SpdSyn"/>
    <property type="match status" value="1"/>
</dbReference>
<dbReference type="NCBIfam" id="NF002010">
    <property type="entry name" value="PRK00811.1"/>
    <property type="match status" value="1"/>
</dbReference>
<dbReference type="NCBIfam" id="TIGR00417">
    <property type="entry name" value="speE"/>
    <property type="match status" value="1"/>
</dbReference>
<dbReference type="PANTHER" id="PTHR11558:SF11">
    <property type="entry name" value="SPERMIDINE SYNTHASE"/>
    <property type="match status" value="1"/>
</dbReference>
<dbReference type="PANTHER" id="PTHR11558">
    <property type="entry name" value="SPERMIDINE/SPERMINE SYNTHASE"/>
    <property type="match status" value="1"/>
</dbReference>
<dbReference type="Pfam" id="PF17284">
    <property type="entry name" value="Spermine_synt_N"/>
    <property type="match status" value="1"/>
</dbReference>
<dbReference type="Pfam" id="PF01564">
    <property type="entry name" value="Spermine_synth"/>
    <property type="match status" value="1"/>
</dbReference>
<dbReference type="SUPFAM" id="SSF53335">
    <property type="entry name" value="S-adenosyl-L-methionine-dependent methyltransferases"/>
    <property type="match status" value="1"/>
</dbReference>
<dbReference type="PROSITE" id="PS01330">
    <property type="entry name" value="PABS_1"/>
    <property type="match status" value="1"/>
</dbReference>
<dbReference type="PROSITE" id="PS51006">
    <property type="entry name" value="PABS_2"/>
    <property type="match status" value="1"/>
</dbReference>
<protein>
    <recommendedName>
        <fullName evidence="1">Polyamine aminopropyltransferase</fullName>
    </recommendedName>
    <alternativeName>
        <fullName evidence="1">Putrescine aminopropyltransferase</fullName>
        <shortName evidence="1">PAPT</shortName>
    </alternativeName>
    <alternativeName>
        <fullName evidence="1">Spermidine synthase</fullName>
        <shortName evidence="1">SPDS</shortName>
        <shortName evidence="1">SPDSY</shortName>
        <ecNumber evidence="1">2.5.1.16</ecNumber>
    </alternativeName>
</protein>
<keyword id="KW-0963">Cytoplasm</keyword>
<keyword id="KW-0620">Polyamine biosynthesis</keyword>
<keyword id="KW-0745">Spermidine biosynthesis</keyword>
<keyword id="KW-0808">Transferase</keyword>
<evidence type="ECO:0000255" key="1">
    <source>
        <dbReference type="HAMAP-Rule" id="MF_00198"/>
    </source>
</evidence>
<organism>
    <name type="scientific">Yersinia pseudotuberculosis serotype IB (strain PB1/+)</name>
    <dbReference type="NCBI Taxonomy" id="502801"/>
    <lineage>
        <taxon>Bacteria</taxon>
        <taxon>Pseudomonadati</taxon>
        <taxon>Pseudomonadota</taxon>
        <taxon>Gammaproteobacteria</taxon>
        <taxon>Enterobacterales</taxon>
        <taxon>Yersiniaceae</taxon>
        <taxon>Yersinia</taxon>
    </lineage>
</organism>
<name>SPEE_YERPB</name>
<reference key="1">
    <citation type="submission" date="2008-04" db="EMBL/GenBank/DDBJ databases">
        <title>Complete sequence of Yersinia pseudotuberculosis PB1/+.</title>
        <authorList>
            <person name="Copeland A."/>
            <person name="Lucas S."/>
            <person name="Lapidus A."/>
            <person name="Glavina del Rio T."/>
            <person name="Dalin E."/>
            <person name="Tice H."/>
            <person name="Bruce D."/>
            <person name="Goodwin L."/>
            <person name="Pitluck S."/>
            <person name="Munk A.C."/>
            <person name="Brettin T."/>
            <person name="Detter J.C."/>
            <person name="Han C."/>
            <person name="Tapia R."/>
            <person name="Schmutz J."/>
            <person name="Larimer F."/>
            <person name="Land M."/>
            <person name="Hauser L."/>
            <person name="Challacombe J.F."/>
            <person name="Green L."/>
            <person name="Lindler L.E."/>
            <person name="Nikolich M.P."/>
            <person name="Richardson P."/>
        </authorList>
    </citation>
    <scope>NUCLEOTIDE SEQUENCE [LARGE SCALE GENOMIC DNA]</scope>
    <source>
        <strain>PB1/+</strain>
    </source>
</reference>
<feature type="chain" id="PRO_1000099310" description="Polyamine aminopropyltransferase">
    <location>
        <begin position="1"/>
        <end position="296"/>
    </location>
</feature>
<feature type="domain" description="PABS" evidence="1">
    <location>
        <begin position="5"/>
        <end position="238"/>
    </location>
</feature>
<feature type="active site" description="Proton acceptor" evidence="1">
    <location>
        <position position="158"/>
    </location>
</feature>
<feature type="binding site" evidence="1">
    <location>
        <position position="33"/>
    </location>
    <ligand>
        <name>S-methyl-5'-thioadenosine</name>
        <dbReference type="ChEBI" id="CHEBI:17509"/>
    </ligand>
</feature>
<feature type="binding site" evidence="1">
    <location>
        <position position="64"/>
    </location>
    <ligand>
        <name>spermidine</name>
        <dbReference type="ChEBI" id="CHEBI:57834"/>
    </ligand>
</feature>
<feature type="binding site" evidence="1">
    <location>
        <position position="88"/>
    </location>
    <ligand>
        <name>spermidine</name>
        <dbReference type="ChEBI" id="CHEBI:57834"/>
    </ligand>
</feature>
<feature type="binding site" evidence="1">
    <location>
        <position position="108"/>
    </location>
    <ligand>
        <name>S-methyl-5'-thioadenosine</name>
        <dbReference type="ChEBI" id="CHEBI:17509"/>
    </ligand>
</feature>
<feature type="binding site" evidence="1">
    <location>
        <begin position="140"/>
        <end position="141"/>
    </location>
    <ligand>
        <name>S-methyl-5'-thioadenosine</name>
        <dbReference type="ChEBI" id="CHEBI:17509"/>
    </ligand>
</feature>
<feature type="binding site" evidence="1">
    <location>
        <begin position="158"/>
        <end position="161"/>
    </location>
    <ligand>
        <name>spermidine</name>
        <dbReference type="ChEBI" id="CHEBI:57834"/>
    </ligand>
</feature>
<feature type="binding site" evidence="1">
    <location>
        <position position="165"/>
    </location>
    <ligand>
        <name>S-methyl-5'-thioadenosine</name>
        <dbReference type="ChEBI" id="CHEBI:17509"/>
    </ligand>
</feature>
<proteinExistence type="inferred from homology"/>